<name>ACP_PARDP</name>
<feature type="chain" id="PRO_1000066647" description="Acyl carrier protein">
    <location>
        <begin position="1"/>
        <end position="77"/>
    </location>
</feature>
<feature type="domain" description="Carrier" evidence="2">
    <location>
        <begin position="2"/>
        <end position="77"/>
    </location>
</feature>
<feature type="modified residue" description="O-(pantetheine 4'-phosphoryl)serine" evidence="2">
    <location>
        <position position="37"/>
    </location>
</feature>
<sequence length="77" mass="8375">MSDIADRVKKIVVEHLGVDEEKVTETASFIDDLGADSLDTVELVMAFEEEFGIEIPDDAAETIQTFGDAVKFIQGAV</sequence>
<keyword id="KW-0963">Cytoplasm</keyword>
<keyword id="KW-0275">Fatty acid biosynthesis</keyword>
<keyword id="KW-0276">Fatty acid metabolism</keyword>
<keyword id="KW-0444">Lipid biosynthesis</keyword>
<keyword id="KW-0443">Lipid metabolism</keyword>
<keyword id="KW-0596">Phosphopantetheine</keyword>
<keyword id="KW-0597">Phosphoprotein</keyword>
<keyword id="KW-1185">Reference proteome</keyword>
<proteinExistence type="inferred from homology"/>
<organism>
    <name type="scientific">Paracoccus denitrificans (strain Pd 1222)</name>
    <dbReference type="NCBI Taxonomy" id="318586"/>
    <lineage>
        <taxon>Bacteria</taxon>
        <taxon>Pseudomonadati</taxon>
        <taxon>Pseudomonadota</taxon>
        <taxon>Alphaproteobacteria</taxon>
        <taxon>Rhodobacterales</taxon>
        <taxon>Paracoccaceae</taxon>
        <taxon>Paracoccus</taxon>
    </lineage>
</organism>
<dbReference type="EMBL" id="CP000489">
    <property type="protein sequence ID" value="ABL69865.1"/>
    <property type="molecule type" value="Genomic_DNA"/>
</dbReference>
<dbReference type="RefSeq" id="WP_011748063.1">
    <property type="nucleotide sequence ID" value="NC_008686.1"/>
</dbReference>
<dbReference type="SMR" id="A1B2X1"/>
<dbReference type="STRING" id="318586.Pden_1768"/>
<dbReference type="EnsemblBacteria" id="ABL69865">
    <property type="protein sequence ID" value="ABL69865"/>
    <property type="gene ID" value="Pden_1768"/>
</dbReference>
<dbReference type="KEGG" id="pde:Pden_1768"/>
<dbReference type="eggNOG" id="COG0236">
    <property type="taxonomic scope" value="Bacteria"/>
</dbReference>
<dbReference type="HOGENOM" id="CLU_108696_5_1_5"/>
<dbReference type="OrthoDB" id="9804551at2"/>
<dbReference type="UniPathway" id="UPA00094"/>
<dbReference type="Proteomes" id="UP000000361">
    <property type="component" value="Chromosome 1"/>
</dbReference>
<dbReference type="GO" id="GO:0005829">
    <property type="term" value="C:cytosol"/>
    <property type="evidence" value="ECO:0007669"/>
    <property type="project" value="TreeGrafter"/>
</dbReference>
<dbReference type="GO" id="GO:0016020">
    <property type="term" value="C:membrane"/>
    <property type="evidence" value="ECO:0007669"/>
    <property type="project" value="GOC"/>
</dbReference>
<dbReference type="GO" id="GO:0000035">
    <property type="term" value="F:acyl binding"/>
    <property type="evidence" value="ECO:0007669"/>
    <property type="project" value="TreeGrafter"/>
</dbReference>
<dbReference type="GO" id="GO:0000036">
    <property type="term" value="F:acyl carrier activity"/>
    <property type="evidence" value="ECO:0007669"/>
    <property type="project" value="UniProtKB-UniRule"/>
</dbReference>
<dbReference type="GO" id="GO:0031177">
    <property type="term" value="F:phosphopantetheine binding"/>
    <property type="evidence" value="ECO:0007669"/>
    <property type="project" value="InterPro"/>
</dbReference>
<dbReference type="GO" id="GO:0009245">
    <property type="term" value="P:lipid A biosynthetic process"/>
    <property type="evidence" value="ECO:0007669"/>
    <property type="project" value="TreeGrafter"/>
</dbReference>
<dbReference type="FunFam" id="1.10.1200.10:FF:000001">
    <property type="entry name" value="Acyl carrier protein"/>
    <property type="match status" value="1"/>
</dbReference>
<dbReference type="Gene3D" id="1.10.1200.10">
    <property type="entry name" value="ACP-like"/>
    <property type="match status" value="1"/>
</dbReference>
<dbReference type="HAMAP" id="MF_01217">
    <property type="entry name" value="Acyl_carrier"/>
    <property type="match status" value="1"/>
</dbReference>
<dbReference type="InterPro" id="IPR003231">
    <property type="entry name" value="ACP"/>
</dbReference>
<dbReference type="InterPro" id="IPR036736">
    <property type="entry name" value="ACP-like_sf"/>
</dbReference>
<dbReference type="InterPro" id="IPR020806">
    <property type="entry name" value="PKS_PP-bd"/>
</dbReference>
<dbReference type="InterPro" id="IPR009081">
    <property type="entry name" value="PP-bd_ACP"/>
</dbReference>
<dbReference type="InterPro" id="IPR006162">
    <property type="entry name" value="Ppantetheine_attach_site"/>
</dbReference>
<dbReference type="NCBIfam" id="TIGR00517">
    <property type="entry name" value="acyl_carrier"/>
    <property type="match status" value="1"/>
</dbReference>
<dbReference type="NCBIfam" id="NF002148">
    <property type="entry name" value="PRK00982.1-2"/>
    <property type="match status" value="1"/>
</dbReference>
<dbReference type="NCBIfam" id="NF002149">
    <property type="entry name" value="PRK00982.1-3"/>
    <property type="match status" value="1"/>
</dbReference>
<dbReference type="NCBIfam" id="NF002150">
    <property type="entry name" value="PRK00982.1-4"/>
    <property type="match status" value="1"/>
</dbReference>
<dbReference type="NCBIfam" id="NF002151">
    <property type="entry name" value="PRK00982.1-5"/>
    <property type="match status" value="1"/>
</dbReference>
<dbReference type="PANTHER" id="PTHR20863">
    <property type="entry name" value="ACYL CARRIER PROTEIN"/>
    <property type="match status" value="1"/>
</dbReference>
<dbReference type="PANTHER" id="PTHR20863:SF76">
    <property type="entry name" value="CARRIER DOMAIN-CONTAINING PROTEIN"/>
    <property type="match status" value="1"/>
</dbReference>
<dbReference type="Pfam" id="PF00550">
    <property type="entry name" value="PP-binding"/>
    <property type="match status" value="1"/>
</dbReference>
<dbReference type="SMART" id="SM00823">
    <property type="entry name" value="PKS_PP"/>
    <property type="match status" value="1"/>
</dbReference>
<dbReference type="SUPFAM" id="SSF47336">
    <property type="entry name" value="ACP-like"/>
    <property type="match status" value="1"/>
</dbReference>
<dbReference type="PROSITE" id="PS50075">
    <property type="entry name" value="CARRIER"/>
    <property type="match status" value="1"/>
</dbReference>
<dbReference type="PROSITE" id="PS00012">
    <property type="entry name" value="PHOSPHOPANTETHEINE"/>
    <property type="match status" value="1"/>
</dbReference>
<protein>
    <recommendedName>
        <fullName evidence="1">Acyl carrier protein</fullName>
        <shortName evidence="1">ACP</shortName>
    </recommendedName>
</protein>
<evidence type="ECO:0000255" key="1">
    <source>
        <dbReference type="HAMAP-Rule" id="MF_01217"/>
    </source>
</evidence>
<evidence type="ECO:0000255" key="2">
    <source>
        <dbReference type="PROSITE-ProRule" id="PRU00258"/>
    </source>
</evidence>
<comment type="function">
    <text evidence="1">Carrier of the growing fatty acid chain in fatty acid biosynthesis.</text>
</comment>
<comment type="pathway">
    <text evidence="1">Lipid metabolism; fatty acid biosynthesis.</text>
</comment>
<comment type="subcellular location">
    <subcellularLocation>
        <location evidence="1">Cytoplasm</location>
    </subcellularLocation>
</comment>
<comment type="PTM">
    <text evidence="1">4'-phosphopantetheine is transferred from CoA to a specific serine of apo-ACP by AcpS. This modification is essential for activity because fatty acids are bound in thioester linkage to the sulfhydryl of the prosthetic group.</text>
</comment>
<comment type="similarity">
    <text evidence="1">Belongs to the acyl carrier protein (ACP) family.</text>
</comment>
<accession>A1B2X1</accession>
<reference key="1">
    <citation type="submission" date="2006-12" db="EMBL/GenBank/DDBJ databases">
        <title>Complete sequence of chromosome 1 of Paracoccus denitrificans PD1222.</title>
        <authorList>
            <person name="Copeland A."/>
            <person name="Lucas S."/>
            <person name="Lapidus A."/>
            <person name="Barry K."/>
            <person name="Detter J.C."/>
            <person name="Glavina del Rio T."/>
            <person name="Hammon N."/>
            <person name="Israni S."/>
            <person name="Dalin E."/>
            <person name="Tice H."/>
            <person name="Pitluck S."/>
            <person name="Munk A.C."/>
            <person name="Brettin T."/>
            <person name="Bruce D."/>
            <person name="Han C."/>
            <person name="Tapia R."/>
            <person name="Gilna P."/>
            <person name="Schmutz J."/>
            <person name="Larimer F."/>
            <person name="Land M."/>
            <person name="Hauser L."/>
            <person name="Kyrpides N."/>
            <person name="Lykidis A."/>
            <person name="Spiro S."/>
            <person name="Richardson D.J."/>
            <person name="Moir J.W.B."/>
            <person name="Ferguson S.J."/>
            <person name="van Spanning R.J.M."/>
            <person name="Richardson P."/>
        </authorList>
    </citation>
    <scope>NUCLEOTIDE SEQUENCE [LARGE SCALE GENOMIC DNA]</scope>
    <source>
        <strain>Pd 1222</strain>
    </source>
</reference>
<gene>
    <name evidence="1" type="primary">acpP</name>
    <name type="ordered locus">Pden_1768</name>
</gene>